<dbReference type="EMBL" id="AP012216">
    <property type="protein sequence ID" value="BAO40497.1"/>
    <property type="molecule type" value="Genomic_DNA"/>
</dbReference>
<dbReference type="RefSeq" id="XP_022676318.1">
    <property type="nucleotide sequence ID" value="XM_022819787.1"/>
</dbReference>
<dbReference type="PDB" id="4P1N">
    <property type="method" value="X-ray"/>
    <property type="resolution" value="2.20 A"/>
    <property type="chains" value="C/D=440-500"/>
</dbReference>
<dbReference type="PDBsum" id="4P1N"/>
<dbReference type="SMR" id="W0TA43"/>
<dbReference type="DIP" id="DIP-60844N"/>
<dbReference type="IntAct" id="W0TA43">
    <property type="interactions" value="1"/>
</dbReference>
<dbReference type="GeneID" id="34716459"/>
<dbReference type="VEuPathDB" id="FungiDB:KLMA_40473"/>
<dbReference type="OrthoDB" id="70161at2759"/>
<dbReference type="EvolutionaryTrace" id="W0TA43"/>
<dbReference type="Proteomes" id="UP000065495">
    <property type="component" value="Chromosome 4"/>
</dbReference>
<dbReference type="GO" id="GO:1990316">
    <property type="term" value="C:Atg1/ULK1 kinase complex"/>
    <property type="evidence" value="ECO:0007669"/>
    <property type="project" value="InterPro"/>
</dbReference>
<dbReference type="GO" id="GO:0005829">
    <property type="term" value="C:cytosol"/>
    <property type="evidence" value="ECO:0007669"/>
    <property type="project" value="TreeGrafter"/>
</dbReference>
<dbReference type="GO" id="GO:0000407">
    <property type="term" value="C:phagophore assembly site"/>
    <property type="evidence" value="ECO:0007669"/>
    <property type="project" value="UniProtKB-SubCell"/>
</dbReference>
<dbReference type="GO" id="GO:0000423">
    <property type="term" value="P:mitophagy"/>
    <property type="evidence" value="ECO:0007669"/>
    <property type="project" value="TreeGrafter"/>
</dbReference>
<dbReference type="GO" id="GO:0034727">
    <property type="term" value="P:piecemeal microautophagy of the nucleus"/>
    <property type="evidence" value="ECO:0007669"/>
    <property type="project" value="TreeGrafter"/>
</dbReference>
<dbReference type="GO" id="GO:0034497">
    <property type="term" value="P:protein localization to phagophore assembly site"/>
    <property type="evidence" value="ECO:0007669"/>
    <property type="project" value="TreeGrafter"/>
</dbReference>
<dbReference type="GO" id="GO:0015031">
    <property type="term" value="P:protein transport"/>
    <property type="evidence" value="ECO:0007669"/>
    <property type="project" value="UniProtKB-KW"/>
</dbReference>
<dbReference type="Gene3D" id="6.10.140.1900">
    <property type="match status" value="1"/>
</dbReference>
<dbReference type="Gene3D" id="3.30.900.10">
    <property type="entry name" value="HORMA domain"/>
    <property type="match status" value="1"/>
</dbReference>
<dbReference type="InterPro" id="IPR040182">
    <property type="entry name" value="ATG13"/>
</dbReference>
<dbReference type="InterPro" id="IPR018731">
    <property type="entry name" value="Atg13_N"/>
</dbReference>
<dbReference type="InterPro" id="IPR036570">
    <property type="entry name" value="HORMA_dom_sf"/>
</dbReference>
<dbReference type="PANTHER" id="PTHR13430">
    <property type="match status" value="1"/>
</dbReference>
<dbReference type="PANTHER" id="PTHR13430:SF4">
    <property type="entry name" value="AUTOPHAGY-RELATED PROTEIN 13"/>
    <property type="match status" value="1"/>
</dbReference>
<dbReference type="Pfam" id="PF10033">
    <property type="entry name" value="ATG13"/>
    <property type="match status" value="1"/>
</dbReference>
<evidence type="ECO:0000250" key="1">
    <source>
        <dbReference type="UniProtKB" id="Q06628"/>
    </source>
</evidence>
<evidence type="ECO:0000256" key="2">
    <source>
        <dbReference type="SAM" id="MobiDB-lite"/>
    </source>
</evidence>
<evidence type="ECO:0000269" key="3">
    <source>
    </source>
</evidence>
<evidence type="ECO:0000269" key="4">
    <source>
    </source>
</evidence>
<evidence type="ECO:0000303" key="5">
    <source>
    </source>
</evidence>
<evidence type="ECO:0000305" key="6"/>
<evidence type="ECO:0007744" key="7">
    <source>
        <dbReference type="PDB" id="4P1N"/>
    </source>
</evidence>
<evidence type="ECO:0007829" key="8">
    <source>
        <dbReference type="PDB" id="4P1N"/>
    </source>
</evidence>
<gene>
    <name evidence="5" type="primary">ATG13</name>
    <name type="ORF">KLMA_40473</name>
</gene>
<accession>W0TA43</accession>
<feature type="chain" id="PRO_0000443908" description="Autophagy-related protein 13">
    <location>
        <begin position="1"/>
        <end position="712"/>
    </location>
</feature>
<feature type="region of interest" description="Disordered" evidence="2">
    <location>
        <begin position="388"/>
        <end position="443"/>
    </location>
</feature>
<feature type="region of interest" description="ATG17-binding" evidence="3">
    <location>
        <begin position="412"/>
        <end position="420"/>
    </location>
</feature>
<feature type="region of interest" description="ATG1-binding" evidence="3">
    <location>
        <begin position="441"/>
        <end position="500"/>
    </location>
</feature>
<feature type="region of interest" description="Disordered" evidence="2">
    <location>
        <begin position="568"/>
        <end position="611"/>
    </location>
</feature>
<feature type="compositionally biased region" description="Low complexity" evidence="2">
    <location>
        <begin position="402"/>
        <end position="415"/>
    </location>
</feature>
<feature type="compositionally biased region" description="Basic and acidic residues" evidence="2">
    <location>
        <begin position="424"/>
        <end position="439"/>
    </location>
</feature>
<feature type="compositionally biased region" description="Acidic residues" evidence="2">
    <location>
        <begin position="576"/>
        <end position="585"/>
    </location>
</feature>
<feature type="helix" evidence="8">
    <location>
        <begin position="447"/>
        <end position="454"/>
    </location>
</feature>
<feature type="helix" evidence="8">
    <location>
        <begin position="464"/>
        <end position="466"/>
    </location>
</feature>
<feature type="helix" evidence="8">
    <location>
        <begin position="472"/>
        <end position="496"/>
    </location>
</feature>
<sequence>MSDSDREIIGLINNFFLKAALLLEQCKVVARGGGFDGEEPLRDGNHLFNIETRGDPTLEAQIQPWTTFDGEKSMPPLVLETFLDLRGLHSNQTVYLHDSDGNPWMVCKGGKKSEIVLERWLIELDRQFSSTTGSTDAAEDDEYNEFNDPENLHKQLVLLFRYLYTLTQLLPANDIITKLQASQQGTAQATTTTGTLKPLHIHTRLLDGSKPILSKGRVGLSKPIIASYSNTMNETNIASHLEQRKITPIKTKFGSLRITVSYRKDVDFYVIDQEDPYKRTTNVSALQDTVTATDRRISSNSNISISVSPKTTNMLNANHIPVDSSGGGFARRQSISSKLQPFKVGSVGSGSFVQSGSLQSVTNPNPSLSRNVSSSSVAAALKVQRGSAGSTVLNSDLPPELSSVGSGSKYSSSFGRIRRHSSVRRSESIDRTAKPRKSNETPPEDLLEFVKLLEDKKELNMKPSTILPQQDISSSLIKFQSMKPNNDTLSDNLSMSMSIDQPNMRMGSNSHSPIPSFSPNYGSIPSRLSQGSRNNSNVELITSRKSSLDRHRLSLLNRTGSNVDIRRGSVGTMETTNEDSKEDEDSHVHGLRFNSGTVNDKTEDNNEDDDEEEILIKRSSNAVASSTEHFSVSPRSARSISVSSYTRSQLPLKHPNFSYPTTSATTAHAKFHKSEVIPDQLHREGSHHHNSSHKNDEDDDLLFVMSDMNLTN</sequence>
<proteinExistence type="evidence at protein level"/>
<organism>
    <name type="scientific">Kluyveromyces marxianus (strain DMKU3-1042 / BCC 29191 / NBRC 104275)</name>
    <name type="common">Yeast</name>
    <name type="synonym">Candida kefyr</name>
    <dbReference type="NCBI Taxonomy" id="1003335"/>
    <lineage>
        <taxon>Eukaryota</taxon>
        <taxon>Fungi</taxon>
        <taxon>Dikarya</taxon>
        <taxon>Ascomycota</taxon>
        <taxon>Saccharomycotina</taxon>
        <taxon>Saccharomycetes</taxon>
        <taxon>Saccharomycetales</taxon>
        <taxon>Saccharomycetaceae</taxon>
        <taxon>Kluyveromyces</taxon>
    </lineage>
</organism>
<comment type="function">
    <text evidence="1 3 4">Activates the ATG1 kinase in a nutritional condition dependent manner through the TOR pathway, leading to autophagy (PubMed:24793651, PubMed:26442587). Involved in ATG9 and ATG23 cycling through the pre-autophagosomal structure (By similarity). Also involved in cytoplasm to vacuole transport (Cvt) and more specifically in Cvt vesicle formation (PubMed:24793651). Seems to play a role in the switching machinery regulating the conversion between the Cvt pathway and autophagy (By similarity). Finally, ATG13 is also required for glycogen storage during stationary phase (By similarity).</text>
</comment>
<comment type="subunit">
    <text evidence="1 3">Hypophosphorylated form interacts with ATG1 to form the ATG1-ATG13 kinase complex (PubMed:24793651). The ATG1-ATG13 complex interacts with the ATG17-ATG29-ATG31 complex through direct interaction with ATG17 (PubMed:24793651). Interacts with VAC8 (By similarity).</text>
</comment>
<comment type="interaction">
    <interactant intactId="EBI-16104996">
        <id>W0TA43</id>
    </interactant>
    <interactant intactId="EBI-16104970">
        <id>W0T9X4</id>
        <label>ATG1</label>
    </interactant>
    <organismsDiffer>false</organismsDiffer>
    <experiments>3</experiments>
</comment>
<comment type="subcellular location">
    <subcellularLocation>
        <location evidence="1">Cytoplasm</location>
    </subcellularLocation>
    <subcellularLocation>
        <location evidence="1">Preautophagosomal structure</location>
    </subcellularLocation>
</comment>
<comment type="domain">
    <text evidence="3">The minimum ATG1-binding domain (residues 441 to 500) comprises two alpha-helices and a linker connecting them (PubMed:24793651).</text>
</comment>
<comment type="PTM">
    <text evidence="3">Hyperphosphorylated under nutrient-rich conditions (PubMed:24793651). Starvation and TOR inactivation results in ATG13 partial dephosphorylation leading to ATG1-binding (PubMed:24793651). Dephosphorylation induces ATG17-binding (PubMed:24793651).</text>
</comment>
<comment type="disruption phenotype">
    <text evidence="3 4">Impairs ATG17 localization to the preautophagosomal structure (PubMed:24793651). Still forms preautophagosomal structures (PAS) in proximity to the vacuolar membrane (PubMed:26442587).</text>
</comment>
<comment type="miscellaneous">
    <text evidence="4">Kluyveromyces marxianus proteins are shorter in length and have a more ordered secondary structure than their S.cerevisiae counterparts, which might contribute to the superior thermotolerance and solubility (PubMed:26442587). K.marxianus could be therefore useful as a new model organism for further elucidation of the molecular details of autophagy (PubMed:26442587).</text>
</comment>
<comment type="similarity">
    <text evidence="6">Belongs to the ATG13 family. Fungi subfamily.</text>
</comment>
<keyword id="KW-0002">3D-structure</keyword>
<keyword id="KW-0072">Autophagy</keyword>
<keyword id="KW-0963">Cytoplasm</keyword>
<keyword id="KW-0597">Phosphoprotein</keyword>
<keyword id="KW-0653">Protein transport</keyword>
<keyword id="KW-0813">Transport</keyword>
<name>ATG13_KLUMD</name>
<reference key="1">
    <citation type="journal article" date="2015" name="Biotechnol. Biofuels">
        <title>Genetic basis of the highly efficient yeast Kluyveromyces marxianus: complete genome sequence and transcriptome analyses.</title>
        <authorList>
            <person name="Lertwattanasakul N."/>
            <person name="Kosaka T."/>
            <person name="Hosoyama A."/>
            <person name="Suzuki Y."/>
            <person name="Rodrussamee N."/>
            <person name="Matsutani M."/>
            <person name="Murata M."/>
            <person name="Fujimoto N."/>
            <person name="Suprayogi X."/>
            <person name="Tsuchikane K."/>
            <person name="Limtong S."/>
            <person name="Fujita N."/>
            <person name="Yamada M."/>
        </authorList>
    </citation>
    <scope>NUCLEOTIDE SEQUENCE [LARGE SCALE GENOMIC DNA]</scope>
    <source>
        <strain>DMKU3-1042 / BCC 29191 / NBRC 104275</strain>
    </source>
</reference>
<reference key="2">
    <citation type="journal article" date="2015" name="J. Biol. Chem.">
        <title>The thermotolerant yeast Kluyveromyces marxianus is a useful organism for structural and biochemical studies of autophagy.</title>
        <authorList>
            <person name="Yamamoto H."/>
            <person name="Shima T."/>
            <person name="Yamaguchi M."/>
            <person name="Mochizuki Y."/>
            <person name="Hoshida H."/>
            <person name="Kakuta S."/>
            <person name="Kondo-Kakuta C."/>
            <person name="Noda N.N."/>
            <person name="Inagaki F."/>
            <person name="Itoh T."/>
            <person name="Akada R."/>
            <person name="Ohsumi Y."/>
        </authorList>
    </citation>
    <scope>IDENTIFICATION</scope>
    <scope>FUNCTION</scope>
    <scope>DISRUPTION PHENOTYPE</scope>
</reference>
<reference evidence="7" key="3">
    <citation type="journal article" date="2014" name="Nat. Struct. Mol. Biol.">
        <title>Structural basis of starvation-induced assembly of the autophagy initiation complex.</title>
        <authorList>
            <person name="Fujioka Y."/>
            <person name="Suzuki S.W."/>
            <person name="Yamamoto H."/>
            <person name="Kondo-Kakuta C."/>
            <person name="Kimura Y."/>
            <person name="Hirano H."/>
            <person name="Akada R."/>
            <person name="Inagaki F."/>
            <person name="Ohsumi Y."/>
            <person name="Noda N.N."/>
        </authorList>
    </citation>
    <scope>X-RAY CRYSTALLOGRAPHY (2.20 ANGSTROMS) OF 441-500 IN COMPLEX WITH ATG1</scope>
    <scope>INTERACTION WITH ATG1 AND ATG17</scope>
    <scope>DOMAIN</scope>
    <scope>FUNCTION</scope>
    <scope>DISRUPTION PHENOTYPE</scope>
    <scope>PHOSPHORYLATION</scope>
</reference>
<protein>
    <recommendedName>
        <fullName evidence="5">Autophagy-related protein 13</fullName>
    </recommendedName>
</protein>